<dbReference type="EMBL" id="M15952">
    <property type="protein sequence ID" value="AAA42487.1"/>
    <property type="molecule type" value="Genomic_DNA"/>
</dbReference>
<dbReference type="GO" id="GO:0044167">
    <property type="term" value="C:host cell endoplasmic reticulum membrane"/>
    <property type="evidence" value="ECO:0007669"/>
    <property type="project" value="UniProtKB-SubCell"/>
</dbReference>
<dbReference type="GO" id="GO:0016020">
    <property type="term" value="C:membrane"/>
    <property type="evidence" value="ECO:0007669"/>
    <property type="project" value="UniProtKB-KW"/>
</dbReference>
<dbReference type="InterPro" id="IPR005041">
    <property type="entry name" value="Adeno_E3B"/>
</dbReference>
<dbReference type="Pfam" id="PF03376">
    <property type="entry name" value="Adeno_E3B"/>
    <property type="match status" value="1"/>
</dbReference>
<protein>
    <recommendedName>
        <fullName>Early E3B 10.4 kDa protein</fullName>
    </recommendedName>
</protein>
<name>E310_ADE03</name>
<comment type="function">
    <text>Down-regulates the EGF receptor.</text>
</comment>
<comment type="subcellular location">
    <subcellularLocation>
        <location evidence="3">Host endoplasmic reticulum membrane</location>
        <topology evidence="3">Single-pass type I membrane protein</topology>
    </subcellularLocation>
</comment>
<comment type="similarity">
    <text evidence="3">Belongs to the adenoviridae E3B family.</text>
</comment>
<sequence>MIPRNFFFTILICPFNVCATFTAVATASPDCIGPFASYALFAFVTCICVCSIVCLVINFFQLVDWIFVRIAYLRHHPEYRNQNVAALLRLI</sequence>
<accession>P11318</accession>
<feature type="signal peptide" evidence="1">
    <location>
        <begin position="1"/>
        <end position="22"/>
    </location>
</feature>
<feature type="chain" id="PRO_0000036472" description="Early E3B 10.4 kDa protein">
    <location>
        <begin position="23"/>
        <end position="91"/>
    </location>
</feature>
<feature type="topological domain" description="Lumenal" evidence="2">
    <location>
        <begin position="23"/>
        <end position="34"/>
    </location>
</feature>
<feature type="transmembrane region" description="Helical" evidence="2">
    <location>
        <begin position="35"/>
        <end position="60"/>
    </location>
</feature>
<feature type="topological domain" description="Cytoplasmic" evidence="2">
    <location>
        <begin position="61"/>
        <end position="91"/>
    </location>
</feature>
<organism>
    <name type="scientific">Human adenovirus B serotype 3</name>
    <name type="common">HAdV-3</name>
    <name type="synonym">Human adenovirus 3</name>
    <dbReference type="NCBI Taxonomy" id="45659"/>
    <lineage>
        <taxon>Viruses</taxon>
        <taxon>Varidnaviria</taxon>
        <taxon>Bamfordvirae</taxon>
        <taxon>Preplasmiviricota</taxon>
        <taxon>Tectiliviricetes</taxon>
        <taxon>Rowavirales</taxon>
        <taxon>Adenoviridae</taxon>
        <taxon>Mastadenovirus</taxon>
        <taxon>Human mastadenovirus B</taxon>
    </lineage>
</organism>
<organismHost>
    <name type="scientific">Homo sapiens</name>
    <name type="common">Human</name>
    <dbReference type="NCBI Taxonomy" id="9606"/>
</organismHost>
<keyword id="KW-0244">Early protein</keyword>
<keyword id="KW-1038">Host endoplasmic reticulum</keyword>
<keyword id="KW-1043">Host membrane</keyword>
<keyword id="KW-0472">Membrane</keyword>
<keyword id="KW-0732">Signal</keyword>
<keyword id="KW-0812">Transmembrane</keyword>
<keyword id="KW-1133">Transmembrane helix</keyword>
<evidence type="ECO:0000250" key="1"/>
<evidence type="ECO:0000255" key="2"/>
<evidence type="ECO:0000305" key="3"/>
<reference key="1">
    <citation type="journal article" date="1986" name="Gene">
        <title>Region E3 of human adenoviruses; differences between the oncogenic adenovirus-3 and the non-oncogenic adenovirus-2.</title>
        <authorList>
            <person name="Signaes C."/>
            <person name="Akusjaervi G."/>
            <person name="Pettersson U."/>
        </authorList>
    </citation>
    <scope>NUCLEOTIDE SEQUENCE [GENOMIC DNA]</scope>
</reference>
<reference key="2">
    <citation type="journal article" date="1990" name="J. Virol.">
        <title>A 10,400-molecular-weight membrane protein is coded by region E3 of adenovirus.</title>
        <authorList>
            <person name="Tollefson A.E."/>
            <person name="Krajsci P."/>
            <person name="Yei S."/>
            <person name="Carlin C.R."/>
            <person name="Wold W.S.M."/>
        </authorList>
    </citation>
    <scope>IDENTIFICATION OF PROTEIN</scope>
</reference>
<proteinExistence type="inferred from homology"/>